<comment type="function">
    <text evidence="1">Excises uracil residues from the DNA which can arise as a result of misincorporation of dUMP residues by DNA polymerase or due to deamination of cytosine.</text>
</comment>
<comment type="catalytic activity">
    <reaction evidence="1">
        <text>Hydrolyzes single-stranded DNA or mismatched double-stranded DNA and polynucleotides, releasing free uracil.</text>
        <dbReference type="EC" id="3.2.2.27"/>
    </reaction>
</comment>
<comment type="subcellular location">
    <subcellularLocation>
        <location evidence="1">Cytoplasm</location>
    </subcellularLocation>
</comment>
<comment type="similarity">
    <text evidence="1">Belongs to the uracil-DNA glycosylase (UDG) superfamily. UNG family.</text>
</comment>
<protein>
    <recommendedName>
        <fullName evidence="1">Uracil-DNA glycosylase</fullName>
        <shortName evidence="1">UDG</shortName>
        <ecNumber evidence="1">3.2.2.27</ecNumber>
    </recommendedName>
</protein>
<organism>
    <name type="scientific">Buchnera aphidicola subsp. Baizongia pistaciae (strain Bp)</name>
    <dbReference type="NCBI Taxonomy" id="224915"/>
    <lineage>
        <taxon>Bacteria</taxon>
        <taxon>Pseudomonadati</taxon>
        <taxon>Pseudomonadota</taxon>
        <taxon>Gammaproteobacteria</taxon>
        <taxon>Enterobacterales</taxon>
        <taxon>Erwiniaceae</taxon>
        <taxon>Buchnera</taxon>
    </lineage>
</organism>
<keyword id="KW-0963">Cytoplasm</keyword>
<keyword id="KW-0227">DNA damage</keyword>
<keyword id="KW-0234">DNA repair</keyword>
<keyword id="KW-0378">Hydrolase</keyword>
<keyword id="KW-1185">Reference proteome</keyword>
<feature type="chain" id="PRO_0000176076" description="Uracil-DNA glycosylase">
    <location>
        <begin position="1"/>
        <end position="224"/>
    </location>
</feature>
<feature type="active site" description="Proton acceptor" evidence="1">
    <location>
        <position position="65"/>
    </location>
</feature>
<accession>P59465</accession>
<proteinExistence type="inferred from homology"/>
<gene>
    <name evidence="1" type="primary">ung</name>
    <name type="ordered locus">bbp_172</name>
</gene>
<name>UNG_BUCBP</name>
<sequence>MDNRTLLNWSSILKNEKKKYYFINIINHLFFERQKKMIFPPKGKVFNAFVHTQLYDIKVVILGQDPYYKINQAHGLAFSVENIVKFIPSSLKNIQKEIISDLGQNRSFSHGCLTKWALQGVFLLNSVLTVEAGKPGSHYKLGWERFTNKVISIINEYCKGVVFLLWGSYAQKKICLIDRTRHYILLAPHPSPLSAYRGFFGCRHFSKTNKILKQQNKSPINWFF</sequence>
<dbReference type="EC" id="3.2.2.27" evidence="1"/>
<dbReference type="EMBL" id="AE016826">
    <property type="protein sequence ID" value="AAO26905.1"/>
    <property type="molecule type" value="Genomic_DNA"/>
</dbReference>
<dbReference type="RefSeq" id="WP_011091306.1">
    <property type="nucleotide sequence ID" value="NC_004545.1"/>
</dbReference>
<dbReference type="SMR" id="P59465"/>
<dbReference type="STRING" id="224915.bbp_172"/>
<dbReference type="KEGG" id="bab:bbp_172"/>
<dbReference type="eggNOG" id="COG0692">
    <property type="taxonomic scope" value="Bacteria"/>
</dbReference>
<dbReference type="HOGENOM" id="CLU_032162_3_1_6"/>
<dbReference type="OrthoDB" id="9804372at2"/>
<dbReference type="Proteomes" id="UP000000601">
    <property type="component" value="Chromosome"/>
</dbReference>
<dbReference type="GO" id="GO:0005737">
    <property type="term" value="C:cytoplasm"/>
    <property type="evidence" value="ECO:0007669"/>
    <property type="project" value="UniProtKB-SubCell"/>
</dbReference>
<dbReference type="GO" id="GO:0004844">
    <property type="term" value="F:uracil DNA N-glycosylase activity"/>
    <property type="evidence" value="ECO:0007669"/>
    <property type="project" value="UniProtKB-UniRule"/>
</dbReference>
<dbReference type="GO" id="GO:0097510">
    <property type="term" value="P:base-excision repair, AP site formation via deaminated base removal"/>
    <property type="evidence" value="ECO:0007669"/>
    <property type="project" value="TreeGrafter"/>
</dbReference>
<dbReference type="CDD" id="cd10027">
    <property type="entry name" value="UDG-F1-like"/>
    <property type="match status" value="1"/>
</dbReference>
<dbReference type="FunFam" id="3.40.470.10:FF:000001">
    <property type="entry name" value="Uracil-DNA glycosylase"/>
    <property type="match status" value="1"/>
</dbReference>
<dbReference type="Gene3D" id="3.40.470.10">
    <property type="entry name" value="Uracil-DNA glycosylase-like domain"/>
    <property type="match status" value="1"/>
</dbReference>
<dbReference type="HAMAP" id="MF_00148">
    <property type="entry name" value="UDG"/>
    <property type="match status" value="1"/>
</dbReference>
<dbReference type="InterPro" id="IPR002043">
    <property type="entry name" value="UDG_fam1"/>
</dbReference>
<dbReference type="InterPro" id="IPR018085">
    <property type="entry name" value="Ura-DNA_Glyclase_AS"/>
</dbReference>
<dbReference type="InterPro" id="IPR005122">
    <property type="entry name" value="Uracil-DNA_glycosylase-like"/>
</dbReference>
<dbReference type="InterPro" id="IPR036895">
    <property type="entry name" value="Uracil-DNA_glycosylase-like_sf"/>
</dbReference>
<dbReference type="NCBIfam" id="NF003588">
    <property type="entry name" value="PRK05254.1-1"/>
    <property type="match status" value="1"/>
</dbReference>
<dbReference type="NCBIfam" id="NF003589">
    <property type="entry name" value="PRK05254.1-2"/>
    <property type="match status" value="1"/>
</dbReference>
<dbReference type="NCBIfam" id="NF003592">
    <property type="entry name" value="PRK05254.1-5"/>
    <property type="match status" value="1"/>
</dbReference>
<dbReference type="NCBIfam" id="TIGR00628">
    <property type="entry name" value="ung"/>
    <property type="match status" value="1"/>
</dbReference>
<dbReference type="PANTHER" id="PTHR11264">
    <property type="entry name" value="URACIL-DNA GLYCOSYLASE"/>
    <property type="match status" value="1"/>
</dbReference>
<dbReference type="PANTHER" id="PTHR11264:SF0">
    <property type="entry name" value="URACIL-DNA GLYCOSYLASE"/>
    <property type="match status" value="1"/>
</dbReference>
<dbReference type="Pfam" id="PF03167">
    <property type="entry name" value="UDG"/>
    <property type="match status" value="1"/>
</dbReference>
<dbReference type="SMART" id="SM00986">
    <property type="entry name" value="UDG"/>
    <property type="match status" value="1"/>
</dbReference>
<dbReference type="SMART" id="SM00987">
    <property type="entry name" value="UreE_C"/>
    <property type="match status" value="1"/>
</dbReference>
<dbReference type="SUPFAM" id="SSF52141">
    <property type="entry name" value="Uracil-DNA glycosylase-like"/>
    <property type="match status" value="1"/>
</dbReference>
<dbReference type="PROSITE" id="PS00130">
    <property type="entry name" value="U_DNA_GLYCOSYLASE"/>
    <property type="match status" value="1"/>
</dbReference>
<reference key="1">
    <citation type="journal article" date="2003" name="Proc. Natl. Acad. Sci. U.S.A.">
        <title>Reductive genome evolution in Buchnera aphidicola.</title>
        <authorList>
            <person name="van Ham R.C.H.J."/>
            <person name="Kamerbeek J."/>
            <person name="Palacios C."/>
            <person name="Rausell C."/>
            <person name="Abascal F."/>
            <person name="Bastolla U."/>
            <person name="Fernandez J.M."/>
            <person name="Jimenez L."/>
            <person name="Postigo M."/>
            <person name="Silva F.J."/>
            <person name="Tamames J."/>
            <person name="Viguera E."/>
            <person name="Latorre A."/>
            <person name="Valencia A."/>
            <person name="Moran F."/>
            <person name="Moya A."/>
        </authorList>
    </citation>
    <scope>NUCLEOTIDE SEQUENCE [LARGE SCALE GENOMIC DNA]</scope>
    <source>
        <strain>Bp</strain>
    </source>
</reference>
<evidence type="ECO:0000255" key="1">
    <source>
        <dbReference type="HAMAP-Rule" id="MF_00148"/>
    </source>
</evidence>